<reference key="1">
    <citation type="journal article" date="2011" name="J. Bacteriol.">
        <title>Comparative genomics of 28 Salmonella enterica isolates: evidence for CRISPR-mediated adaptive sublineage evolution.</title>
        <authorList>
            <person name="Fricke W.F."/>
            <person name="Mammel M.K."/>
            <person name="McDermott P.F."/>
            <person name="Tartera C."/>
            <person name="White D.G."/>
            <person name="Leclerc J.E."/>
            <person name="Ravel J."/>
            <person name="Cebula T.A."/>
        </authorList>
    </citation>
    <scope>NUCLEOTIDE SEQUENCE [LARGE SCALE GENOMIC DNA]</scope>
    <source>
        <strain>CVM19633</strain>
    </source>
</reference>
<keyword id="KW-0030">Aminoacyl-tRNA synthetase</keyword>
<keyword id="KW-0067">ATP-binding</keyword>
<keyword id="KW-0963">Cytoplasm</keyword>
<keyword id="KW-0436">Ligase</keyword>
<keyword id="KW-0547">Nucleotide-binding</keyword>
<keyword id="KW-0648">Protein biosynthesis</keyword>
<feature type="chain" id="PRO_1000101338" description="Glycine--tRNA ligase beta subunit">
    <location>
        <begin position="1"/>
        <end position="689"/>
    </location>
</feature>
<gene>
    <name evidence="1" type="primary">glyS</name>
    <name type="ordered locus">SeSA_A3849</name>
</gene>
<name>SYGB_SALSV</name>
<protein>
    <recommendedName>
        <fullName evidence="1">Glycine--tRNA ligase beta subunit</fullName>
        <ecNumber evidence="1">6.1.1.14</ecNumber>
    </recommendedName>
    <alternativeName>
        <fullName evidence="1">Glycyl-tRNA synthetase beta subunit</fullName>
        <shortName evidence="1">GlyRS</shortName>
    </alternativeName>
</protein>
<comment type="catalytic activity">
    <reaction evidence="1">
        <text>tRNA(Gly) + glycine + ATP = glycyl-tRNA(Gly) + AMP + diphosphate</text>
        <dbReference type="Rhea" id="RHEA:16013"/>
        <dbReference type="Rhea" id="RHEA-COMP:9664"/>
        <dbReference type="Rhea" id="RHEA-COMP:9683"/>
        <dbReference type="ChEBI" id="CHEBI:30616"/>
        <dbReference type="ChEBI" id="CHEBI:33019"/>
        <dbReference type="ChEBI" id="CHEBI:57305"/>
        <dbReference type="ChEBI" id="CHEBI:78442"/>
        <dbReference type="ChEBI" id="CHEBI:78522"/>
        <dbReference type="ChEBI" id="CHEBI:456215"/>
        <dbReference type="EC" id="6.1.1.14"/>
    </reaction>
</comment>
<comment type="subunit">
    <text evidence="1">Tetramer of two alpha and two beta subunits.</text>
</comment>
<comment type="subcellular location">
    <subcellularLocation>
        <location evidence="1">Cytoplasm</location>
    </subcellularLocation>
</comment>
<comment type="similarity">
    <text evidence="1">Belongs to the class-II aminoacyl-tRNA synthetase family.</text>
</comment>
<evidence type="ECO:0000255" key="1">
    <source>
        <dbReference type="HAMAP-Rule" id="MF_00255"/>
    </source>
</evidence>
<sequence length="689" mass="76468">MSEKTFLVEIGTEELPPKALRSLAESFAANFTAELDNAGLAHGNVEWFAAPRRLALKVANLAESQPDREVEKRGPAIAQAFDAEGKPSKAAEGWARGCGITVDQAERLKTDKGEWLLYRAHVKGESTEALVPNMVATSLAKLPIPKLMRWGASDVHFVRPVHTVTLLLGDKVIPATILGIQSDRVIRGHRFMGEPEFTIDNADQYPQILLERGKVIADYEARKAKIKADAEEAARKIGGNADLSESLLEEVASLVEWPVVLTAKFEEKFLAVPAEALVYTMKGDQKYFPVYDNAGKLLPNFIFVANIESKDPTQIISGNEKVVRPRLADAEFFFNTDRKKRLEDHLPRLQTVLFQQQLGTLRDKTDRIQALAGWIAGQIGADVNHATRAGLLSKCDLMTNMVFEFTDTQGVMGMHYARHDGEAEDVAVALNEQYQPRFAGDDLPSNPVACALAIADKMDTLAGIFGIGQHPKGDKDPFALRRAALGVLRIIVEKNLNLDLQTLTEEAARLYGDKLTNANVVDDVIDFMLGRFRAWYQDEGYTVDTIQAVLARRPTRPADFDARMKAVSHFRTLEEASALAAANKRVSNILAKATEPLNDIVHASVLKEAAEIELARHLVVLRDKLQPYFADGRYQEALIELAALRAPVDEFFENVMVNAEEKDIRINRLTLLSKLRELFLQVADISLLQ</sequence>
<organism>
    <name type="scientific">Salmonella schwarzengrund (strain CVM19633)</name>
    <dbReference type="NCBI Taxonomy" id="439843"/>
    <lineage>
        <taxon>Bacteria</taxon>
        <taxon>Pseudomonadati</taxon>
        <taxon>Pseudomonadota</taxon>
        <taxon>Gammaproteobacteria</taxon>
        <taxon>Enterobacterales</taxon>
        <taxon>Enterobacteriaceae</taxon>
        <taxon>Salmonella</taxon>
    </lineage>
</organism>
<dbReference type="EC" id="6.1.1.14" evidence="1"/>
<dbReference type="EMBL" id="CP001127">
    <property type="protein sequence ID" value="ACF91425.1"/>
    <property type="molecule type" value="Genomic_DNA"/>
</dbReference>
<dbReference type="RefSeq" id="WP_001291738.1">
    <property type="nucleotide sequence ID" value="NC_011094.1"/>
</dbReference>
<dbReference type="SMR" id="B4TZ49"/>
<dbReference type="KEGG" id="sew:SeSA_A3849"/>
<dbReference type="HOGENOM" id="CLU_007220_2_2_6"/>
<dbReference type="Proteomes" id="UP000001865">
    <property type="component" value="Chromosome"/>
</dbReference>
<dbReference type="GO" id="GO:0005829">
    <property type="term" value="C:cytosol"/>
    <property type="evidence" value="ECO:0007669"/>
    <property type="project" value="TreeGrafter"/>
</dbReference>
<dbReference type="GO" id="GO:0004814">
    <property type="term" value="F:arginine-tRNA ligase activity"/>
    <property type="evidence" value="ECO:0007669"/>
    <property type="project" value="InterPro"/>
</dbReference>
<dbReference type="GO" id="GO:0005524">
    <property type="term" value="F:ATP binding"/>
    <property type="evidence" value="ECO:0007669"/>
    <property type="project" value="UniProtKB-UniRule"/>
</dbReference>
<dbReference type="GO" id="GO:0004820">
    <property type="term" value="F:glycine-tRNA ligase activity"/>
    <property type="evidence" value="ECO:0007669"/>
    <property type="project" value="UniProtKB-UniRule"/>
</dbReference>
<dbReference type="GO" id="GO:0006420">
    <property type="term" value="P:arginyl-tRNA aminoacylation"/>
    <property type="evidence" value="ECO:0007669"/>
    <property type="project" value="InterPro"/>
</dbReference>
<dbReference type="GO" id="GO:0006426">
    <property type="term" value="P:glycyl-tRNA aminoacylation"/>
    <property type="evidence" value="ECO:0007669"/>
    <property type="project" value="UniProtKB-UniRule"/>
</dbReference>
<dbReference type="HAMAP" id="MF_00255">
    <property type="entry name" value="Gly_tRNA_synth_beta"/>
    <property type="match status" value="1"/>
</dbReference>
<dbReference type="InterPro" id="IPR008909">
    <property type="entry name" value="DALR_anticod-bd"/>
</dbReference>
<dbReference type="InterPro" id="IPR015944">
    <property type="entry name" value="Gly-tRNA-synth_bsu"/>
</dbReference>
<dbReference type="InterPro" id="IPR006194">
    <property type="entry name" value="Gly-tRNA-synth_heterodimer"/>
</dbReference>
<dbReference type="NCBIfam" id="TIGR00211">
    <property type="entry name" value="glyS"/>
    <property type="match status" value="1"/>
</dbReference>
<dbReference type="PANTHER" id="PTHR30075:SF2">
    <property type="entry name" value="GLYCINE--TRNA LIGASE, CHLOROPLASTIC_MITOCHONDRIAL 2"/>
    <property type="match status" value="1"/>
</dbReference>
<dbReference type="PANTHER" id="PTHR30075">
    <property type="entry name" value="GLYCYL-TRNA SYNTHETASE"/>
    <property type="match status" value="1"/>
</dbReference>
<dbReference type="Pfam" id="PF05746">
    <property type="entry name" value="DALR_1"/>
    <property type="match status" value="1"/>
</dbReference>
<dbReference type="Pfam" id="PF02092">
    <property type="entry name" value="tRNA_synt_2f"/>
    <property type="match status" value="1"/>
</dbReference>
<dbReference type="PRINTS" id="PR01045">
    <property type="entry name" value="TRNASYNTHGB"/>
</dbReference>
<dbReference type="SUPFAM" id="SSF109604">
    <property type="entry name" value="HD-domain/PDEase-like"/>
    <property type="match status" value="1"/>
</dbReference>
<dbReference type="PROSITE" id="PS50861">
    <property type="entry name" value="AA_TRNA_LIGASE_II_GLYAB"/>
    <property type="match status" value="1"/>
</dbReference>
<accession>B4TZ49</accession>
<proteinExistence type="inferred from homology"/>